<proteinExistence type="inferred from homology"/>
<keyword id="KW-0238">DNA-binding</keyword>
<keyword id="KW-0658">Purine biosynthesis</keyword>
<keyword id="KW-1185">Reference proteome</keyword>
<keyword id="KW-0678">Repressor</keyword>
<keyword id="KW-0804">Transcription</keyword>
<keyword id="KW-0805">Transcription regulation</keyword>
<protein>
    <recommendedName>
        <fullName evidence="1">HTH-type transcriptional repressor PurR</fullName>
    </recommendedName>
    <alternativeName>
        <fullName evidence="1">Pur regulon repressor</fullName>
    </alternativeName>
    <alternativeName>
        <fullName evidence="1">Purine nucleotide synthesis repressor</fullName>
    </alternativeName>
</protein>
<organism>
    <name type="scientific">Salmonella arizonae (strain ATCC BAA-731 / CDC346-86 / RSK2980)</name>
    <dbReference type="NCBI Taxonomy" id="41514"/>
    <lineage>
        <taxon>Bacteria</taxon>
        <taxon>Pseudomonadati</taxon>
        <taxon>Pseudomonadota</taxon>
        <taxon>Gammaproteobacteria</taxon>
        <taxon>Enterobacterales</taxon>
        <taxon>Enterobacteriaceae</taxon>
        <taxon>Salmonella</taxon>
    </lineage>
</organism>
<comment type="function">
    <text evidence="1">Is the main repressor of the genes involved in the de novo synthesis of purine nucleotides, regulating purB, purC, purEK, purF, purHD, purL, purMN and guaBA expression. PurR is allosterically activated to bind its cognate DNA by binding the purine corepressors, hypoxanthine or guanine, thereby effecting transcription repression.</text>
</comment>
<comment type="pathway">
    <text>Purine metabolism; purine nucleotide biosynthesis [regulation].</text>
</comment>
<comment type="subunit">
    <text evidence="1">Homodimer.</text>
</comment>
<comment type="domain">
    <text evidence="1">Consists of two structural and functional domains: an N-terminal DNA-binding domain, approximately the first 60 residues, and a larger C-terminal domain, approximately 280 residues, which imparts the function of corepressor binding and oligomerization.</text>
</comment>
<accession>A9MEJ1</accession>
<gene>
    <name evidence="1" type="primary">purR</name>
    <name type="ordered locus">SARI_01552</name>
</gene>
<feature type="chain" id="PRO_1000085875" description="HTH-type transcriptional repressor PurR">
    <location>
        <begin position="1"/>
        <end position="341"/>
    </location>
</feature>
<feature type="domain" description="HTH lacI-type" evidence="1">
    <location>
        <begin position="2"/>
        <end position="56"/>
    </location>
</feature>
<feature type="DNA-binding region" description="H-T-H motif" evidence="1">
    <location>
        <begin position="4"/>
        <end position="23"/>
    </location>
</feature>
<feature type="DNA-binding region" evidence="1">
    <location>
        <begin position="48"/>
        <end position="56"/>
    </location>
</feature>
<feature type="binding site" evidence="1">
    <location>
        <position position="73"/>
    </location>
    <ligand>
        <name>hypoxanthine</name>
        <dbReference type="ChEBI" id="CHEBI:17368"/>
    </ligand>
</feature>
<feature type="binding site" evidence="1">
    <location>
        <position position="190"/>
    </location>
    <ligand>
        <name>hypoxanthine</name>
        <dbReference type="ChEBI" id="CHEBI:17368"/>
    </ligand>
</feature>
<feature type="binding site" evidence="1">
    <location>
        <position position="192"/>
    </location>
    <ligand>
        <name>hypoxanthine</name>
        <dbReference type="ChEBI" id="CHEBI:17368"/>
    </ligand>
</feature>
<feature type="binding site" evidence="1">
    <location>
        <position position="221"/>
    </location>
    <ligand>
        <name>hypoxanthine</name>
        <dbReference type="ChEBI" id="CHEBI:17368"/>
    </ligand>
</feature>
<feature type="binding site" evidence="1">
    <location>
        <position position="275"/>
    </location>
    <ligand>
        <name>hypoxanthine</name>
        <dbReference type="ChEBI" id="CHEBI:17368"/>
    </ligand>
</feature>
<sequence>MATIKDVAKRANVSTTTVSHVINKTRFVAEETRNAVWAAIKELHYSPSAVARSLKVNHTKSIGLLATSSEAAYFAEIIEAVEKNCFQKGYTLILGNAWNNLEKQRAYLSMMAQKRVDGLLVMCSEYPEPLLSMLEEYRHIPMVVMDWGEAKADFTDTVIDNAFEGGYMAGRYLVERGHRDIGVIPGPLERNTGAGRLAGFMKAMEEALIKVPDNWIVQGDFEPESGYHAMQQILSQSHRPTAVFCGGDIMAMGALCAADEMGLRVPQDVSVIGYDNVRNARFFTPALTTIHQPKDSLGETAFNMLLDRIVNKREESQSIEVHPRLVERRSVADGPFRDYRR</sequence>
<evidence type="ECO:0000255" key="1">
    <source>
        <dbReference type="HAMAP-Rule" id="MF_01277"/>
    </source>
</evidence>
<name>PURR_SALAR</name>
<dbReference type="EMBL" id="CP000880">
    <property type="protein sequence ID" value="ABX21448.1"/>
    <property type="molecule type" value="Genomic_DNA"/>
</dbReference>
<dbReference type="SMR" id="A9MEJ1"/>
<dbReference type="STRING" id="41514.SARI_01552"/>
<dbReference type="KEGG" id="ses:SARI_01552"/>
<dbReference type="HOGENOM" id="CLU_037628_6_2_6"/>
<dbReference type="UniPathway" id="UPA00488"/>
<dbReference type="Proteomes" id="UP000002084">
    <property type="component" value="Chromosome"/>
</dbReference>
<dbReference type="GO" id="GO:0003700">
    <property type="term" value="F:DNA-binding transcription factor activity"/>
    <property type="evidence" value="ECO:0007669"/>
    <property type="project" value="TreeGrafter"/>
</dbReference>
<dbReference type="GO" id="GO:0000976">
    <property type="term" value="F:transcription cis-regulatory region binding"/>
    <property type="evidence" value="ECO:0007669"/>
    <property type="project" value="TreeGrafter"/>
</dbReference>
<dbReference type="GO" id="GO:0045892">
    <property type="term" value="P:negative regulation of DNA-templated transcription"/>
    <property type="evidence" value="ECO:0007669"/>
    <property type="project" value="UniProtKB-UniRule"/>
</dbReference>
<dbReference type="GO" id="GO:0006164">
    <property type="term" value="P:purine nucleotide biosynthetic process"/>
    <property type="evidence" value="ECO:0007669"/>
    <property type="project" value="UniProtKB-UniPathway"/>
</dbReference>
<dbReference type="CDD" id="cd01392">
    <property type="entry name" value="HTH_LacI"/>
    <property type="match status" value="1"/>
</dbReference>
<dbReference type="CDD" id="cd06275">
    <property type="entry name" value="PBP1_PurR"/>
    <property type="match status" value="1"/>
</dbReference>
<dbReference type="FunFam" id="1.10.260.40:FF:000002">
    <property type="entry name" value="HTH-type transcriptional repressor PurR"/>
    <property type="match status" value="1"/>
</dbReference>
<dbReference type="FunFam" id="3.40.50.2300:FF:000045">
    <property type="entry name" value="HTH-type transcriptional repressor PurR"/>
    <property type="match status" value="1"/>
</dbReference>
<dbReference type="Gene3D" id="3.40.50.2300">
    <property type="match status" value="2"/>
</dbReference>
<dbReference type="Gene3D" id="1.10.260.40">
    <property type="entry name" value="lambda repressor-like DNA-binding domains"/>
    <property type="match status" value="1"/>
</dbReference>
<dbReference type="HAMAP" id="MF_01277">
    <property type="entry name" value="HTH_type_PurR"/>
    <property type="match status" value="1"/>
</dbReference>
<dbReference type="InterPro" id="IPR000843">
    <property type="entry name" value="HTH_LacI"/>
</dbReference>
<dbReference type="InterPro" id="IPR046335">
    <property type="entry name" value="LacI/GalR-like_sensor"/>
</dbReference>
<dbReference type="InterPro" id="IPR010982">
    <property type="entry name" value="Lambda_DNA-bd_dom_sf"/>
</dbReference>
<dbReference type="InterPro" id="IPR028082">
    <property type="entry name" value="Peripla_BP_I"/>
</dbReference>
<dbReference type="InterPro" id="IPR023588">
    <property type="entry name" value="Tscrpt_reg_HTH_PurR"/>
</dbReference>
<dbReference type="NCBIfam" id="NF007979">
    <property type="entry name" value="PRK10703.1"/>
    <property type="match status" value="1"/>
</dbReference>
<dbReference type="PANTHER" id="PTHR30146:SF148">
    <property type="entry name" value="HTH-TYPE TRANSCRIPTIONAL REPRESSOR PURR-RELATED"/>
    <property type="match status" value="1"/>
</dbReference>
<dbReference type="PANTHER" id="PTHR30146">
    <property type="entry name" value="LACI-RELATED TRANSCRIPTIONAL REPRESSOR"/>
    <property type="match status" value="1"/>
</dbReference>
<dbReference type="Pfam" id="PF00356">
    <property type="entry name" value="LacI"/>
    <property type="match status" value="1"/>
</dbReference>
<dbReference type="Pfam" id="PF13377">
    <property type="entry name" value="Peripla_BP_3"/>
    <property type="match status" value="1"/>
</dbReference>
<dbReference type="PRINTS" id="PR00036">
    <property type="entry name" value="HTHLACI"/>
</dbReference>
<dbReference type="SMART" id="SM00354">
    <property type="entry name" value="HTH_LACI"/>
    <property type="match status" value="1"/>
</dbReference>
<dbReference type="SUPFAM" id="SSF47413">
    <property type="entry name" value="lambda repressor-like DNA-binding domains"/>
    <property type="match status" value="1"/>
</dbReference>
<dbReference type="SUPFAM" id="SSF53822">
    <property type="entry name" value="Periplasmic binding protein-like I"/>
    <property type="match status" value="1"/>
</dbReference>
<dbReference type="PROSITE" id="PS00356">
    <property type="entry name" value="HTH_LACI_1"/>
    <property type="match status" value="1"/>
</dbReference>
<dbReference type="PROSITE" id="PS50932">
    <property type="entry name" value="HTH_LACI_2"/>
    <property type="match status" value="1"/>
</dbReference>
<reference key="1">
    <citation type="submission" date="2007-11" db="EMBL/GenBank/DDBJ databases">
        <authorList>
            <consortium name="The Salmonella enterica serovar Arizonae Genome Sequencing Project"/>
            <person name="McClelland M."/>
            <person name="Sanderson E.K."/>
            <person name="Porwollik S."/>
            <person name="Spieth J."/>
            <person name="Clifton W.S."/>
            <person name="Fulton R."/>
            <person name="Chunyan W."/>
            <person name="Wollam A."/>
            <person name="Shah N."/>
            <person name="Pepin K."/>
            <person name="Bhonagiri V."/>
            <person name="Nash W."/>
            <person name="Johnson M."/>
            <person name="Thiruvilangam P."/>
            <person name="Wilson R."/>
        </authorList>
    </citation>
    <scope>NUCLEOTIDE SEQUENCE [LARGE SCALE GENOMIC DNA]</scope>
    <source>
        <strain>ATCC BAA-731 / CDC346-86 / RSK2980</strain>
    </source>
</reference>